<comment type="function">
    <text evidence="1">Component of ribonuclease P, a ribonucleoprotein complex that generates mature tRNA molecules by cleaving their 5'-ends.</text>
</comment>
<comment type="subunit">
    <text evidence="1">RNase P consists of a catalytic RNA moiety and about 10 protein subunits; POP1, POP4, POP5, POP7, RPP14, RPP21, RPP25, RPP30, RPP38 and RPP40. Within the RNase P complex, POP1, POP7 and RPP25 form the 'finger' subcomplex, POP5, RPP14, RPP40 and homodimeric RPP30 form the 'palm' subcomplex, and RPP21, POP4 and RPP38 form the 'wrist' subcomplex. All subunits of the RNase P complex interact with the catalytic RNA.</text>
</comment>
<comment type="subcellular location">
    <subcellularLocation>
        <location evidence="1">Nucleus</location>
        <location evidence="1">Nucleolus</location>
    </subcellularLocation>
</comment>
<comment type="similarity">
    <text evidence="2">Belongs to the eukaryotic/archaeal RNase P protein component 2 family.</text>
</comment>
<name>RPP14_MOUSE</name>
<keyword id="KW-0539">Nucleus</keyword>
<keyword id="KW-1185">Reference proteome</keyword>
<keyword id="KW-0819">tRNA processing</keyword>
<reference key="1">
    <citation type="journal article" date="2005" name="Science">
        <title>The transcriptional landscape of the mammalian genome.</title>
        <authorList>
            <person name="Carninci P."/>
            <person name="Kasukawa T."/>
            <person name="Katayama S."/>
            <person name="Gough J."/>
            <person name="Frith M.C."/>
            <person name="Maeda N."/>
            <person name="Oyama R."/>
            <person name="Ravasi T."/>
            <person name="Lenhard B."/>
            <person name="Wells C."/>
            <person name="Kodzius R."/>
            <person name="Shimokawa K."/>
            <person name="Bajic V.B."/>
            <person name="Brenner S.E."/>
            <person name="Batalov S."/>
            <person name="Forrest A.R."/>
            <person name="Zavolan M."/>
            <person name="Davis M.J."/>
            <person name="Wilming L.G."/>
            <person name="Aidinis V."/>
            <person name="Allen J.E."/>
            <person name="Ambesi-Impiombato A."/>
            <person name="Apweiler R."/>
            <person name="Aturaliya R.N."/>
            <person name="Bailey T.L."/>
            <person name="Bansal M."/>
            <person name="Baxter L."/>
            <person name="Beisel K.W."/>
            <person name="Bersano T."/>
            <person name="Bono H."/>
            <person name="Chalk A.M."/>
            <person name="Chiu K.P."/>
            <person name="Choudhary V."/>
            <person name="Christoffels A."/>
            <person name="Clutterbuck D.R."/>
            <person name="Crowe M.L."/>
            <person name="Dalla E."/>
            <person name="Dalrymple B.P."/>
            <person name="de Bono B."/>
            <person name="Della Gatta G."/>
            <person name="di Bernardo D."/>
            <person name="Down T."/>
            <person name="Engstrom P."/>
            <person name="Fagiolini M."/>
            <person name="Faulkner G."/>
            <person name="Fletcher C.F."/>
            <person name="Fukushima T."/>
            <person name="Furuno M."/>
            <person name="Futaki S."/>
            <person name="Gariboldi M."/>
            <person name="Georgii-Hemming P."/>
            <person name="Gingeras T.R."/>
            <person name="Gojobori T."/>
            <person name="Green R.E."/>
            <person name="Gustincich S."/>
            <person name="Harbers M."/>
            <person name="Hayashi Y."/>
            <person name="Hensch T.K."/>
            <person name="Hirokawa N."/>
            <person name="Hill D."/>
            <person name="Huminiecki L."/>
            <person name="Iacono M."/>
            <person name="Ikeo K."/>
            <person name="Iwama A."/>
            <person name="Ishikawa T."/>
            <person name="Jakt M."/>
            <person name="Kanapin A."/>
            <person name="Katoh M."/>
            <person name="Kawasawa Y."/>
            <person name="Kelso J."/>
            <person name="Kitamura H."/>
            <person name="Kitano H."/>
            <person name="Kollias G."/>
            <person name="Krishnan S.P."/>
            <person name="Kruger A."/>
            <person name="Kummerfeld S.K."/>
            <person name="Kurochkin I.V."/>
            <person name="Lareau L.F."/>
            <person name="Lazarevic D."/>
            <person name="Lipovich L."/>
            <person name="Liu J."/>
            <person name="Liuni S."/>
            <person name="McWilliam S."/>
            <person name="Madan Babu M."/>
            <person name="Madera M."/>
            <person name="Marchionni L."/>
            <person name="Matsuda H."/>
            <person name="Matsuzawa S."/>
            <person name="Miki H."/>
            <person name="Mignone F."/>
            <person name="Miyake S."/>
            <person name="Morris K."/>
            <person name="Mottagui-Tabar S."/>
            <person name="Mulder N."/>
            <person name="Nakano N."/>
            <person name="Nakauchi H."/>
            <person name="Ng P."/>
            <person name="Nilsson R."/>
            <person name="Nishiguchi S."/>
            <person name="Nishikawa S."/>
            <person name="Nori F."/>
            <person name="Ohara O."/>
            <person name="Okazaki Y."/>
            <person name="Orlando V."/>
            <person name="Pang K.C."/>
            <person name="Pavan W.J."/>
            <person name="Pavesi G."/>
            <person name="Pesole G."/>
            <person name="Petrovsky N."/>
            <person name="Piazza S."/>
            <person name="Reed J."/>
            <person name="Reid J.F."/>
            <person name="Ring B.Z."/>
            <person name="Ringwald M."/>
            <person name="Rost B."/>
            <person name="Ruan Y."/>
            <person name="Salzberg S.L."/>
            <person name="Sandelin A."/>
            <person name="Schneider C."/>
            <person name="Schoenbach C."/>
            <person name="Sekiguchi K."/>
            <person name="Semple C.A."/>
            <person name="Seno S."/>
            <person name="Sessa L."/>
            <person name="Sheng Y."/>
            <person name="Shibata Y."/>
            <person name="Shimada H."/>
            <person name="Shimada K."/>
            <person name="Silva D."/>
            <person name="Sinclair B."/>
            <person name="Sperling S."/>
            <person name="Stupka E."/>
            <person name="Sugiura K."/>
            <person name="Sultana R."/>
            <person name="Takenaka Y."/>
            <person name="Taki K."/>
            <person name="Tammoja K."/>
            <person name="Tan S.L."/>
            <person name="Tang S."/>
            <person name="Taylor M.S."/>
            <person name="Tegner J."/>
            <person name="Teichmann S.A."/>
            <person name="Ueda H.R."/>
            <person name="van Nimwegen E."/>
            <person name="Verardo R."/>
            <person name="Wei C.L."/>
            <person name="Yagi K."/>
            <person name="Yamanishi H."/>
            <person name="Zabarovsky E."/>
            <person name="Zhu S."/>
            <person name="Zimmer A."/>
            <person name="Hide W."/>
            <person name="Bult C."/>
            <person name="Grimmond S.M."/>
            <person name="Teasdale R.D."/>
            <person name="Liu E.T."/>
            <person name="Brusic V."/>
            <person name="Quackenbush J."/>
            <person name="Wahlestedt C."/>
            <person name="Mattick J.S."/>
            <person name="Hume D.A."/>
            <person name="Kai C."/>
            <person name="Sasaki D."/>
            <person name="Tomaru Y."/>
            <person name="Fukuda S."/>
            <person name="Kanamori-Katayama M."/>
            <person name="Suzuki M."/>
            <person name="Aoki J."/>
            <person name="Arakawa T."/>
            <person name="Iida J."/>
            <person name="Imamura K."/>
            <person name="Itoh M."/>
            <person name="Kato T."/>
            <person name="Kawaji H."/>
            <person name="Kawagashira N."/>
            <person name="Kawashima T."/>
            <person name="Kojima M."/>
            <person name="Kondo S."/>
            <person name="Konno H."/>
            <person name="Nakano K."/>
            <person name="Ninomiya N."/>
            <person name="Nishio T."/>
            <person name="Okada M."/>
            <person name="Plessy C."/>
            <person name="Shibata K."/>
            <person name="Shiraki T."/>
            <person name="Suzuki S."/>
            <person name="Tagami M."/>
            <person name="Waki K."/>
            <person name="Watahiki A."/>
            <person name="Okamura-Oho Y."/>
            <person name="Suzuki H."/>
            <person name="Kawai J."/>
            <person name="Hayashizaki Y."/>
        </authorList>
    </citation>
    <scope>NUCLEOTIDE SEQUENCE [LARGE SCALE MRNA]</scope>
    <source>
        <strain>C57BL/6J</strain>
        <tissue>Embryo</tissue>
        <tissue>Testis</tissue>
    </source>
</reference>
<reference key="2">
    <citation type="journal article" date="2004" name="Genome Res.">
        <title>The status, quality, and expansion of the NIH full-length cDNA project: the Mammalian Gene Collection (MGC).</title>
        <authorList>
            <consortium name="The MGC Project Team"/>
        </authorList>
    </citation>
    <scope>NUCLEOTIDE SEQUENCE [LARGE SCALE MRNA]</scope>
    <source>
        <strain>C57BL/6J</strain>
        <tissue>Brain</tissue>
        <tissue>Eye</tissue>
    </source>
</reference>
<reference key="3">
    <citation type="journal article" date="2010" name="Cell">
        <title>A tissue-specific atlas of mouse protein phosphorylation and expression.</title>
        <authorList>
            <person name="Huttlin E.L."/>
            <person name="Jedrychowski M.P."/>
            <person name="Elias J.E."/>
            <person name="Goswami T."/>
            <person name="Rad R."/>
            <person name="Beausoleil S.A."/>
            <person name="Villen J."/>
            <person name="Haas W."/>
            <person name="Sowa M.E."/>
            <person name="Gygi S.P."/>
        </authorList>
    </citation>
    <scope>IDENTIFICATION BY MASS SPECTROMETRY [LARGE SCALE ANALYSIS]</scope>
    <source>
        <tissue>Testis</tissue>
    </source>
</reference>
<gene>
    <name type="primary">Rpp14</name>
</gene>
<protein>
    <recommendedName>
        <fullName>Ribonuclease P protein subunit p14</fullName>
    </recommendedName>
</protein>
<dbReference type="EMBL" id="AK012105">
    <property type="protein sequence ID" value="BAB28036.1"/>
    <property type="molecule type" value="mRNA"/>
</dbReference>
<dbReference type="EMBL" id="AK016631">
    <property type="protein sequence ID" value="BAB30347.1"/>
    <property type="molecule type" value="mRNA"/>
</dbReference>
<dbReference type="EMBL" id="BC026988">
    <property type="protein sequence ID" value="AAH26988.1"/>
    <property type="molecule type" value="mRNA"/>
</dbReference>
<dbReference type="EMBL" id="BC046803">
    <property type="protein sequence ID" value="AAH46803.1"/>
    <property type="molecule type" value="mRNA"/>
</dbReference>
<dbReference type="CCDS" id="CCDS26809.1"/>
<dbReference type="RefSeq" id="NP_080214.1">
    <property type="nucleotide sequence ID" value="NM_025938.4"/>
</dbReference>
<dbReference type="RefSeq" id="XP_006518153.1">
    <property type="nucleotide sequence ID" value="XM_006518090.2"/>
</dbReference>
<dbReference type="RefSeq" id="XP_006518154.1">
    <property type="nucleotide sequence ID" value="XM_006518091.2"/>
</dbReference>
<dbReference type="SMR" id="Q9CQH8"/>
<dbReference type="FunCoup" id="Q9CQH8">
    <property type="interactions" value="879"/>
</dbReference>
<dbReference type="IntAct" id="Q9CQH8">
    <property type="interactions" value="2"/>
</dbReference>
<dbReference type="MINT" id="Q9CQH8"/>
<dbReference type="STRING" id="10090.ENSMUSP00000023924"/>
<dbReference type="iPTMnet" id="Q9CQH8"/>
<dbReference type="PhosphoSitePlus" id="Q9CQH8"/>
<dbReference type="PaxDb" id="10090-ENSMUSP00000023924"/>
<dbReference type="PeptideAtlas" id="Q9CQH8"/>
<dbReference type="ProteomicsDB" id="299946"/>
<dbReference type="Pumba" id="Q9CQH8"/>
<dbReference type="Antibodypedia" id="69913">
    <property type="antibodies" value="18 antibodies from 4 providers"/>
</dbReference>
<dbReference type="DNASU" id="67053"/>
<dbReference type="Ensembl" id="ENSMUST00000023924.4">
    <property type="protein sequence ID" value="ENSMUSP00000023924.4"/>
    <property type="gene ID" value="ENSMUSG00000023156.5"/>
</dbReference>
<dbReference type="GeneID" id="67053"/>
<dbReference type="KEGG" id="mmu:67053"/>
<dbReference type="UCSC" id="uc007seq.2">
    <property type="organism name" value="mouse"/>
</dbReference>
<dbReference type="AGR" id="MGI:1914303"/>
<dbReference type="CTD" id="11102"/>
<dbReference type="MGI" id="MGI:1914303">
    <property type="gene designation" value="Rpp14"/>
</dbReference>
<dbReference type="VEuPathDB" id="HostDB:ENSMUSG00000023156"/>
<dbReference type="eggNOG" id="ENOG502S10S">
    <property type="taxonomic scope" value="Eukaryota"/>
</dbReference>
<dbReference type="GeneTree" id="ENSGT00530000065109"/>
<dbReference type="HOGENOM" id="CLU_157358_0_0_1"/>
<dbReference type="InParanoid" id="Q9CQH8"/>
<dbReference type="OrthoDB" id="2262258at2759"/>
<dbReference type="PhylomeDB" id="Q9CQH8"/>
<dbReference type="TreeFam" id="TF324711"/>
<dbReference type="Reactome" id="R-MMU-6791226">
    <property type="pathway name" value="Major pathway of rRNA processing in the nucleolus and cytosol"/>
</dbReference>
<dbReference type="BioGRID-ORCS" id="67053">
    <property type="hits" value="24 hits in 79 CRISPR screens"/>
</dbReference>
<dbReference type="PRO" id="PR:Q9CQH8"/>
<dbReference type="Proteomes" id="UP000000589">
    <property type="component" value="Chromosome 14"/>
</dbReference>
<dbReference type="RNAct" id="Q9CQH8">
    <property type="molecule type" value="protein"/>
</dbReference>
<dbReference type="Bgee" id="ENSMUSG00000023156">
    <property type="expression patterns" value="Expressed in ectoplacental cone and 281 other cell types or tissues"/>
</dbReference>
<dbReference type="ExpressionAtlas" id="Q9CQH8">
    <property type="expression patterns" value="baseline and differential"/>
</dbReference>
<dbReference type="GO" id="GO:0030681">
    <property type="term" value="C:multimeric ribonuclease P complex"/>
    <property type="evidence" value="ECO:0000250"/>
    <property type="project" value="UniProtKB"/>
</dbReference>
<dbReference type="GO" id="GO:0005730">
    <property type="term" value="C:nucleolus"/>
    <property type="evidence" value="ECO:0000250"/>
    <property type="project" value="UniProtKB"/>
</dbReference>
<dbReference type="GO" id="GO:0004526">
    <property type="term" value="F:ribonuclease P activity"/>
    <property type="evidence" value="ECO:0007669"/>
    <property type="project" value="UniProtKB-EC"/>
</dbReference>
<dbReference type="GO" id="GO:0033204">
    <property type="term" value="F:ribonuclease P RNA binding"/>
    <property type="evidence" value="ECO:0000250"/>
    <property type="project" value="UniProtKB"/>
</dbReference>
<dbReference type="GO" id="GO:0001682">
    <property type="term" value="P:tRNA 5'-leader removal"/>
    <property type="evidence" value="ECO:0000250"/>
    <property type="project" value="UniProtKB"/>
</dbReference>
<dbReference type="FunFam" id="3.30.70.3250:FF:000002">
    <property type="entry name" value="ribonuclease P protein subunit p14"/>
    <property type="match status" value="1"/>
</dbReference>
<dbReference type="Gene3D" id="3.30.70.3250">
    <property type="entry name" value="Ribonuclease P, Pop5 subunit"/>
    <property type="match status" value="1"/>
</dbReference>
<dbReference type="InterPro" id="IPR002759">
    <property type="entry name" value="Pop5/Rpp14/Rnp2-like"/>
</dbReference>
<dbReference type="InterPro" id="IPR038085">
    <property type="entry name" value="Rnp2-like_sf"/>
</dbReference>
<dbReference type="PANTHER" id="PTHR15441">
    <property type="entry name" value="RIBONUCLEASE P PROTEIN SUBUNIT P14"/>
    <property type="match status" value="1"/>
</dbReference>
<dbReference type="PANTHER" id="PTHR15441:SF1">
    <property type="entry name" value="RIBONUCLEASE P PROTEIN SUBUNIT P14"/>
    <property type="match status" value="1"/>
</dbReference>
<dbReference type="Pfam" id="PF01900">
    <property type="entry name" value="RNase_P_Rpp14"/>
    <property type="match status" value="1"/>
</dbReference>
<dbReference type="SUPFAM" id="SSF160350">
    <property type="entry name" value="Rnp2-like"/>
    <property type="match status" value="1"/>
</dbReference>
<accession>Q9CQH8</accession>
<feature type="chain" id="PRO_0000140011" description="Ribonuclease P protein subunit p14">
    <location>
        <begin position="1"/>
        <end position="122"/>
    </location>
</feature>
<proteinExistence type="evidence at protein level"/>
<organism>
    <name type="scientific">Mus musculus</name>
    <name type="common">Mouse</name>
    <dbReference type="NCBI Taxonomy" id="10090"/>
    <lineage>
        <taxon>Eukaryota</taxon>
        <taxon>Metazoa</taxon>
        <taxon>Chordata</taxon>
        <taxon>Craniata</taxon>
        <taxon>Vertebrata</taxon>
        <taxon>Euteleostomi</taxon>
        <taxon>Mammalia</taxon>
        <taxon>Eutheria</taxon>
        <taxon>Euarchontoglires</taxon>
        <taxon>Glires</taxon>
        <taxon>Rodentia</taxon>
        <taxon>Myomorpha</taxon>
        <taxon>Muroidea</taxon>
        <taxon>Muridae</taxon>
        <taxon>Murinae</taxon>
        <taxon>Mus</taxon>
        <taxon>Mus</taxon>
    </lineage>
</organism>
<sequence length="122" mass="13565">MPATAYERVVYKSPSEYHYMKVCLEFQEHGVGLNVAQFKQLLVSALRDLFGEVGAALPVDVLTYDEKTLSAILRICSSGLVKLWSSLTLFGAYKSKKCAFRVIQVSPFLLALSGNSREQVLD</sequence>
<evidence type="ECO:0000250" key="1">
    <source>
        <dbReference type="UniProtKB" id="O95059"/>
    </source>
</evidence>
<evidence type="ECO:0000305" key="2"/>